<evidence type="ECO:0000255" key="1">
    <source>
        <dbReference type="HAMAP-Rule" id="MF_00259"/>
    </source>
</evidence>
<keyword id="KW-0032">Aminotransferase</keyword>
<keyword id="KW-0808">Transferase</keyword>
<proteinExistence type="inferred from homology"/>
<dbReference type="EC" id="2.1.2.10" evidence="1"/>
<dbReference type="EMBL" id="AE017220">
    <property type="protein sequence ID" value="AAX66902.1"/>
    <property type="molecule type" value="Genomic_DNA"/>
</dbReference>
<dbReference type="RefSeq" id="WP_000068733.1">
    <property type="nucleotide sequence ID" value="NC_006905.1"/>
</dbReference>
<dbReference type="SMR" id="Q57K60"/>
<dbReference type="KEGG" id="sec:SCH_2996"/>
<dbReference type="HOGENOM" id="CLU_007884_10_2_6"/>
<dbReference type="Proteomes" id="UP000000538">
    <property type="component" value="Chromosome"/>
</dbReference>
<dbReference type="GO" id="GO:0005829">
    <property type="term" value="C:cytosol"/>
    <property type="evidence" value="ECO:0007669"/>
    <property type="project" value="TreeGrafter"/>
</dbReference>
<dbReference type="GO" id="GO:0005960">
    <property type="term" value="C:glycine cleavage complex"/>
    <property type="evidence" value="ECO:0007669"/>
    <property type="project" value="InterPro"/>
</dbReference>
<dbReference type="GO" id="GO:0004047">
    <property type="term" value="F:aminomethyltransferase activity"/>
    <property type="evidence" value="ECO:0007669"/>
    <property type="project" value="UniProtKB-UniRule"/>
</dbReference>
<dbReference type="GO" id="GO:0008483">
    <property type="term" value="F:transaminase activity"/>
    <property type="evidence" value="ECO:0007669"/>
    <property type="project" value="UniProtKB-KW"/>
</dbReference>
<dbReference type="GO" id="GO:0019464">
    <property type="term" value="P:glycine decarboxylation via glycine cleavage system"/>
    <property type="evidence" value="ECO:0007669"/>
    <property type="project" value="UniProtKB-UniRule"/>
</dbReference>
<dbReference type="FunFam" id="2.40.30.110:FF:000001">
    <property type="entry name" value="Aminomethyltransferase"/>
    <property type="match status" value="1"/>
</dbReference>
<dbReference type="FunFam" id="3.30.70.1400:FF:000001">
    <property type="entry name" value="Aminomethyltransferase"/>
    <property type="match status" value="1"/>
</dbReference>
<dbReference type="FunFam" id="4.10.1250.10:FF:000001">
    <property type="entry name" value="Aminomethyltransferase"/>
    <property type="match status" value="1"/>
</dbReference>
<dbReference type="Gene3D" id="2.40.30.110">
    <property type="entry name" value="Aminomethyltransferase beta-barrel domains"/>
    <property type="match status" value="1"/>
</dbReference>
<dbReference type="Gene3D" id="3.30.70.1400">
    <property type="entry name" value="Aminomethyltransferase beta-barrel domains"/>
    <property type="match status" value="1"/>
</dbReference>
<dbReference type="Gene3D" id="4.10.1250.10">
    <property type="entry name" value="Aminomethyltransferase fragment"/>
    <property type="match status" value="1"/>
</dbReference>
<dbReference type="Gene3D" id="3.30.1360.120">
    <property type="entry name" value="Probable tRNA modification gtpase trme, domain 1"/>
    <property type="match status" value="1"/>
</dbReference>
<dbReference type="HAMAP" id="MF_00259">
    <property type="entry name" value="GcvT"/>
    <property type="match status" value="1"/>
</dbReference>
<dbReference type="InterPro" id="IPR006223">
    <property type="entry name" value="GCS_T"/>
</dbReference>
<dbReference type="InterPro" id="IPR022903">
    <property type="entry name" value="GCS_T_bac"/>
</dbReference>
<dbReference type="InterPro" id="IPR013977">
    <property type="entry name" value="GCST_C"/>
</dbReference>
<dbReference type="InterPro" id="IPR006222">
    <property type="entry name" value="GCV_T_N"/>
</dbReference>
<dbReference type="InterPro" id="IPR028896">
    <property type="entry name" value="GcvT/YgfZ/DmdA"/>
</dbReference>
<dbReference type="InterPro" id="IPR029043">
    <property type="entry name" value="GcvT/YgfZ_C"/>
</dbReference>
<dbReference type="InterPro" id="IPR027266">
    <property type="entry name" value="TrmE/GcvT_dom1"/>
</dbReference>
<dbReference type="NCBIfam" id="TIGR00528">
    <property type="entry name" value="gcvT"/>
    <property type="match status" value="1"/>
</dbReference>
<dbReference type="NCBIfam" id="NF001567">
    <property type="entry name" value="PRK00389.1"/>
    <property type="match status" value="1"/>
</dbReference>
<dbReference type="PANTHER" id="PTHR43757">
    <property type="entry name" value="AMINOMETHYLTRANSFERASE"/>
    <property type="match status" value="1"/>
</dbReference>
<dbReference type="PANTHER" id="PTHR43757:SF2">
    <property type="entry name" value="AMINOMETHYLTRANSFERASE, MITOCHONDRIAL"/>
    <property type="match status" value="1"/>
</dbReference>
<dbReference type="Pfam" id="PF01571">
    <property type="entry name" value="GCV_T"/>
    <property type="match status" value="1"/>
</dbReference>
<dbReference type="Pfam" id="PF08669">
    <property type="entry name" value="GCV_T_C"/>
    <property type="match status" value="1"/>
</dbReference>
<dbReference type="PIRSF" id="PIRSF006487">
    <property type="entry name" value="GcvT"/>
    <property type="match status" value="1"/>
</dbReference>
<dbReference type="SUPFAM" id="SSF101790">
    <property type="entry name" value="Aminomethyltransferase beta-barrel domain"/>
    <property type="match status" value="1"/>
</dbReference>
<dbReference type="SUPFAM" id="SSF103025">
    <property type="entry name" value="Folate-binding domain"/>
    <property type="match status" value="1"/>
</dbReference>
<protein>
    <recommendedName>
        <fullName evidence="1">Aminomethyltransferase</fullName>
        <ecNumber evidence="1">2.1.2.10</ecNumber>
    </recommendedName>
    <alternativeName>
        <fullName evidence="1">Glycine cleavage system T protein</fullName>
    </alternativeName>
</protein>
<accession>Q57K60</accession>
<sequence>MAQQTPLYEQHTLCGARMVDFHGWMMPLHYGSQLDEHHAVRTDAGMFDVSHMTIVDLHGSRTREFLRYLLANDVAKLTKTGKALYSGMLNASGGVIDDLIVYYFTEDFFRLVVNSATREKDLSWITQHAEPYAIDITVRDDLSLIAVQGPNAQEKAATLFTDEQRHAVEGMKPFFGVQAGDLFIATTGYTGEAGYEIAMPNEKAADFWRALVEAGVKPCGLGARDTLRLEAGMNLYGQEMDEGISPLAANMGWTIAWEPADRDFIGREALEMQREKGHEQLVGLVMTEKGVLRNELPVRFTDAQGNQQEGIITSGTFSPTLGYSIALARVPAGIGETAIVQIRNREMPVKVTKPVFVRNGKAVA</sequence>
<name>GCST_SALCH</name>
<organism>
    <name type="scientific">Salmonella choleraesuis (strain SC-B67)</name>
    <dbReference type="NCBI Taxonomy" id="321314"/>
    <lineage>
        <taxon>Bacteria</taxon>
        <taxon>Pseudomonadati</taxon>
        <taxon>Pseudomonadota</taxon>
        <taxon>Gammaproteobacteria</taxon>
        <taxon>Enterobacterales</taxon>
        <taxon>Enterobacteriaceae</taxon>
        <taxon>Salmonella</taxon>
    </lineage>
</organism>
<reference key="1">
    <citation type="journal article" date="2005" name="Nucleic Acids Res.">
        <title>The genome sequence of Salmonella enterica serovar Choleraesuis, a highly invasive and resistant zoonotic pathogen.</title>
        <authorList>
            <person name="Chiu C.-H."/>
            <person name="Tang P."/>
            <person name="Chu C."/>
            <person name="Hu S."/>
            <person name="Bao Q."/>
            <person name="Yu J."/>
            <person name="Chou Y.-Y."/>
            <person name="Wang H.-S."/>
            <person name="Lee Y.-S."/>
        </authorList>
    </citation>
    <scope>NUCLEOTIDE SEQUENCE [LARGE SCALE GENOMIC DNA]</scope>
    <source>
        <strain>SC-B67</strain>
    </source>
</reference>
<gene>
    <name evidence="1" type="primary">gcvT</name>
    <name type="ordered locus">SCH_2996</name>
</gene>
<comment type="function">
    <text evidence="1">The glycine cleavage system catalyzes the degradation of glycine.</text>
</comment>
<comment type="catalytic activity">
    <reaction evidence="1">
        <text>N(6)-[(R)-S(8)-aminomethyldihydrolipoyl]-L-lysyl-[protein] + (6S)-5,6,7,8-tetrahydrofolate = N(6)-[(R)-dihydrolipoyl]-L-lysyl-[protein] + (6R)-5,10-methylene-5,6,7,8-tetrahydrofolate + NH4(+)</text>
        <dbReference type="Rhea" id="RHEA:16945"/>
        <dbReference type="Rhea" id="RHEA-COMP:10475"/>
        <dbReference type="Rhea" id="RHEA-COMP:10492"/>
        <dbReference type="ChEBI" id="CHEBI:15636"/>
        <dbReference type="ChEBI" id="CHEBI:28938"/>
        <dbReference type="ChEBI" id="CHEBI:57453"/>
        <dbReference type="ChEBI" id="CHEBI:83100"/>
        <dbReference type="ChEBI" id="CHEBI:83143"/>
        <dbReference type="EC" id="2.1.2.10"/>
    </reaction>
</comment>
<comment type="subunit">
    <text evidence="1">The glycine cleavage system is composed of four proteins: P, T, L and H.</text>
</comment>
<comment type="similarity">
    <text evidence="1">Belongs to the GcvT family.</text>
</comment>
<feature type="chain" id="PRO_1000047696" description="Aminomethyltransferase">
    <location>
        <begin position="1"/>
        <end position="364"/>
    </location>
</feature>